<dbReference type="EC" id="7.-.-.-"/>
<dbReference type="EMBL" id="AE017355">
    <property type="protein sequence ID" value="AAT61386.1"/>
    <property type="molecule type" value="Genomic_DNA"/>
</dbReference>
<dbReference type="RefSeq" id="WP_001182481.1">
    <property type="nucleotide sequence ID" value="NC_005957.1"/>
</dbReference>
<dbReference type="RefSeq" id="YP_036750.1">
    <property type="nucleotide sequence ID" value="NC_005957.1"/>
</dbReference>
<dbReference type="SMR" id="Q6HI76"/>
<dbReference type="KEGG" id="btk:BT9727_2424"/>
<dbReference type="PATRIC" id="fig|281309.8.peg.2565"/>
<dbReference type="HOGENOM" id="CLU_000604_86_7_9"/>
<dbReference type="Proteomes" id="UP000001301">
    <property type="component" value="Chromosome"/>
</dbReference>
<dbReference type="GO" id="GO:0043190">
    <property type="term" value="C:ATP-binding cassette (ABC) transporter complex"/>
    <property type="evidence" value="ECO:0007669"/>
    <property type="project" value="TreeGrafter"/>
</dbReference>
<dbReference type="GO" id="GO:0005524">
    <property type="term" value="F:ATP binding"/>
    <property type="evidence" value="ECO:0007669"/>
    <property type="project" value="UniProtKB-KW"/>
</dbReference>
<dbReference type="GO" id="GO:0016887">
    <property type="term" value="F:ATP hydrolysis activity"/>
    <property type="evidence" value="ECO:0007669"/>
    <property type="project" value="InterPro"/>
</dbReference>
<dbReference type="GO" id="GO:0042626">
    <property type="term" value="F:ATPase-coupled transmembrane transporter activity"/>
    <property type="evidence" value="ECO:0007669"/>
    <property type="project" value="TreeGrafter"/>
</dbReference>
<dbReference type="CDD" id="cd03225">
    <property type="entry name" value="ABC_cobalt_CbiO_domain1"/>
    <property type="match status" value="2"/>
</dbReference>
<dbReference type="FunFam" id="3.40.50.300:FF:001422">
    <property type="entry name" value="Cobalt ABC transporter ATP-binding protein"/>
    <property type="match status" value="1"/>
</dbReference>
<dbReference type="FunFam" id="3.40.50.300:FF:000224">
    <property type="entry name" value="Energy-coupling factor transporter ATP-binding protein EcfA"/>
    <property type="match status" value="1"/>
</dbReference>
<dbReference type="Gene3D" id="3.40.50.300">
    <property type="entry name" value="P-loop containing nucleotide triphosphate hydrolases"/>
    <property type="match status" value="2"/>
</dbReference>
<dbReference type="InterPro" id="IPR003593">
    <property type="entry name" value="AAA+_ATPase"/>
</dbReference>
<dbReference type="InterPro" id="IPR022216">
    <property type="entry name" value="ABC_Co_transporter"/>
</dbReference>
<dbReference type="InterPro" id="IPR003439">
    <property type="entry name" value="ABC_transporter-like_ATP-bd"/>
</dbReference>
<dbReference type="InterPro" id="IPR017871">
    <property type="entry name" value="ABC_transporter-like_CS"/>
</dbReference>
<dbReference type="InterPro" id="IPR015856">
    <property type="entry name" value="ABC_transpr_CbiO/EcfA_su"/>
</dbReference>
<dbReference type="InterPro" id="IPR050095">
    <property type="entry name" value="ECF_ABC_transporter_ATP-bd"/>
</dbReference>
<dbReference type="InterPro" id="IPR027417">
    <property type="entry name" value="P-loop_NTPase"/>
</dbReference>
<dbReference type="NCBIfam" id="NF010167">
    <property type="entry name" value="PRK13648.1"/>
    <property type="match status" value="2"/>
</dbReference>
<dbReference type="PANTHER" id="PTHR43553:SF26">
    <property type="entry name" value="ABC TRANSPORTER ATP-BINDING PROTEIN BC_2655-RELATED"/>
    <property type="match status" value="1"/>
</dbReference>
<dbReference type="PANTHER" id="PTHR43553">
    <property type="entry name" value="HEAVY METAL TRANSPORTER"/>
    <property type="match status" value="1"/>
</dbReference>
<dbReference type="Pfam" id="PF00005">
    <property type="entry name" value="ABC_tran"/>
    <property type="match status" value="2"/>
</dbReference>
<dbReference type="Pfam" id="PF12558">
    <property type="entry name" value="DUF3744"/>
    <property type="match status" value="1"/>
</dbReference>
<dbReference type="SMART" id="SM00382">
    <property type="entry name" value="AAA"/>
    <property type="match status" value="2"/>
</dbReference>
<dbReference type="SUPFAM" id="SSF52540">
    <property type="entry name" value="P-loop containing nucleoside triphosphate hydrolases"/>
    <property type="match status" value="2"/>
</dbReference>
<dbReference type="PROSITE" id="PS00211">
    <property type="entry name" value="ABC_TRANSPORTER_1"/>
    <property type="match status" value="1"/>
</dbReference>
<dbReference type="PROSITE" id="PS50893">
    <property type="entry name" value="ABC_TRANSPORTER_2"/>
    <property type="match status" value="2"/>
</dbReference>
<accession>Q6HI76</accession>
<reference key="1">
    <citation type="journal article" date="2006" name="J. Bacteriol.">
        <title>Pathogenomic sequence analysis of Bacillus cereus and Bacillus thuringiensis isolates closely related to Bacillus anthracis.</title>
        <authorList>
            <person name="Han C.S."/>
            <person name="Xie G."/>
            <person name="Challacombe J.F."/>
            <person name="Altherr M.R."/>
            <person name="Bhotika S.S."/>
            <person name="Bruce D."/>
            <person name="Campbell C.S."/>
            <person name="Campbell M.L."/>
            <person name="Chen J."/>
            <person name="Chertkov O."/>
            <person name="Cleland C."/>
            <person name="Dimitrijevic M."/>
            <person name="Doggett N.A."/>
            <person name="Fawcett J.J."/>
            <person name="Glavina T."/>
            <person name="Goodwin L.A."/>
            <person name="Hill K.K."/>
            <person name="Hitchcock P."/>
            <person name="Jackson P.J."/>
            <person name="Keim P."/>
            <person name="Kewalramani A.R."/>
            <person name="Longmire J."/>
            <person name="Lucas S."/>
            <person name="Malfatti S."/>
            <person name="McMurry K."/>
            <person name="Meincke L.J."/>
            <person name="Misra M."/>
            <person name="Moseman B.L."/>
            <person name="Mundt M."/>
            <person name="Munk A.C."/>
            <person name="Okinaka R.T."/>
            <person name="Parson-Quintana B."/>
            <person name="Reilly L.P."/>
            <person name="Richardson P."/>
            <person name="Robinson D.L."/>
            <person name="Rubin E."/>
            <person name="Saunders E."/>
            <person name="Tapia R."/>
            <person name="Tesmer J.G."/>
            <person name="Thayer N."/>
            <person name="Thompson L.S."/>
            <person name="Tice H."/>
            <person name="Ticknor L.O."/>
            <person name="Wills P.L."/>
            <person name="Brettin T.S."/>
            <person name="Gilna P."/>
        </authorList>
    </citation>
    <scope>NUCLEOTIDE SEQUENCE [LARGE SCALE GENOMIC DNA]</scope>
    <source>
        <strain>97-27</strain>
    </source>
</reference>
<proteinExistence type="inferred from homology"/>
<sequence length="566" mass="63946">MQPIISFEQFNFQYKHAAQPTVKDITFHIYPGEKVLIAGRSGSGKSTLAHCMNGLIPFSYEGTSTGNILIAGKDPRKKSVFELSKHVGTILQDQDAQFIGLTVEEDVAFYLENECVNQDEMKKIVSESLKKVGMHTFHKQSPHELSGGQKQTVSLAGLLTTNAPMLLFDEPLANLDPASSLHTIELIKNIHKQYNKTIVIIEHRIEEMLNLDLDKIILIDEGEIVAIDTPERILASNILPSIGLREPMYIEGLKRLHFDSNNDVIYPLENLHKESISGVIKEWMEKKAFCKDTPTKKELLKVENLSFSYPNKQKGLENVNLSIYEGEIVALLGHNGAGKSTLAHSLIGINKTKNSRILIDGVNINSWSIRKRGEIIFYVMQNPNHMITQSTVIEEVSFTLKLKKVSKEEIKFRAEEALKICGLYPFRNWPIQALSYGQKKRLTIASVLTANPKLIILDEPTAGQDYYHYKQFMSFIRKLAKKGISFIFITHDMNLALEYADRAIVLHEGRIIANHTASIVLGHPATLQRANLKESSLFKLVKFSGIANPEKFMELYFDDIRREEGV</sequence>
<comment type="function">
    <text evidence="1">Probably part of an ABC transporter complex. Responsible for energy coupling to the transport system (By similarity).</text>
</comment>
<comment type="subcellular location">
    <subcellularLocation>
        <location evidence="1">Cell membrane</location>
        <topology evidence="1">Peripheral membrane protein</topology>
    </subcellularLocation>
</comment>
<comment type="similarity">
    <text evidence="3">Belongs to the ABC transporter superfamily.</text>
</comment>
<feature type="chain" id="PRO_0000091984" description="Putative ABC transporter ATP-binding protein BT9727_2424">
    <location>
        <begin position="1"/>
        <end position="566"/>
    </location>
</feature>
<feature type="domain" description="ABC transporter 1" evidence="2">
    <location>
        <begin position="5"/>
        <end position="246"/>
    </location>
</feature>
<feature type="domain" description="ABC transporter 2" evidence="2">
    <location>
        <begin position="300"/>
        <end position="533"/>
    </location>
</feature>
<feature type="binding site" evidence="2">
    <location>
        <begin position="39"/>
        <end position="46"/>
    </location>
    <ligand>
        <name>ATP</name>
        <dbReference type="ChEBI" id="CHEBI:30616"/>
        <label>1</label>
    </ligand>
</feature>
<feature type="binding site" evidence="2">
    <location>
        <begin position="333"/>
        <end position="340"/>
    </location>
    <ligand>
        <name>ATP</name>
        <dbReference type="ChEBI" id="CHEBI:30616"/>
        <label>2</label>
    </ligand>
</feature>
<name>Y2424_BACHK</name>
<keyword id="KW-0067">ATP-binding</keyword>
<keyword id="KW-1003">Cell membrane</keyword>
<keyword id="KW-0472">Membrane</keyword>
<keyword id="KW-0547">Nucleotide-binding</keyword>
<keyword id="KW-0677">Repeat</keyword>
<keyword id="KW-1278">Translocase</keyword>
<keyword id="KW-0813">Transport</keyword>
<evidence type="ECO:0000250" key="1"/>
<evidence type="ECO:0000255" key="2">
    <source>
        <dbReference type="PROSITE-ProRule" id="PRU00434"/>
    </source>
</evidence>
<evidence type="ECO:0000305" key="3"/>
<protein>
    <recommendedName>
        <fullName>Putative ABC transporter ATP-binding protein BT9727_2424</fullName>
        <ecNumber>7.-.-.-</ecNumber>
    </recommendedName>
</protein>
<organism>
    <name type="scientific">Bacillus thuringiensis subsp. konkukian (strain 97-27)</name>
    <dbReference type="NCBI Taxonomy" id="281309"/>
    <lineage>
        <taxon>Bacteria</taxon>
        <taxon>Bacillati</taxon>
        <taxon>Bacillota</taxon>
        <taxon>Bacilli</taxon>
        <taxon>Bacillales</taxon>
        <taxon>Bacillaceae</taxon>
        <taxon>Bacillus</taxon>
        <taxon>Bacillus cereus group</taxon>
    </lineage>
</organism>
<gene>
    <name type="ordered locus">BT9727_2424</name>
</gene>